<accession>Q5LRZ4</accession>
<evidence type="ECO:0000255" key="1">
    <source>
        <dbReference type="HAMAP-Rule" id="MF_00291"/>
    </source>
</evidence>
<evidence type="ECO:0000305" key="2"/>
<dbReference type="EMBL" id="CP000031">
    <property type="protein sequence ID" value="AAV95252.1"/>
    <property type="molecule type" value="Genomic_DNA"/>
</dbReference>
<dbReference type="RefSeq" id="WP_011047707.1">
    <property type="nucleotide sequence ID" value="NC_003911.12"/>
</dbReference>
<dbReference type="SMR" id="Q5LRZ4"/>
<dbReference type="STRING" id="246200.SPO1976"/>
<dbReference type="PaxDb" id="246200-SPO1976"/>
<dbReference type="KEGG" id="sil:SPO1976"/>
<dbReference type="eggNOG" id="COG0052">
    <property type="taxonomic scope" value="Bacteria"/>
</dbReference>
<dbReference type="HOGENOM" id="CLU_040318_2_1_5"/>
<dbReference type="OrthoDB" id="9808036at2"/>
<dbReference type="Proteomes" id="UP000001023">
    <property type="component" value="Chromosome"/>
</dbReference>
<dbReference type="GO" id="GO:0022627">
    <property type="term" value="C:cytosolic small ribosomal subunit"/>
    <property type="evidence" value="ECO:0007669"/>
    <property type="project" value="TreeGrafter"/>
</dbReference>
<dbReference type="GO" id="GO:0003735">
    <property type="term" value="F:structural constituent of ribosome"/>
    <property type="evidence" value="ECO:0007669"/>
    <property type="project" value="InterPro"/>
</dbReference>
<dbReference type="GO" id="GO:0006412">
    <property type="term" value="P:translation"/>
    <property type="evidence" value="ECO:0007669"/>
    <property type="project" value="UniProtKB-UniRule"/>
</dbReference>
<dbReference type="CDD" id="cd01425">
    <property type="entry name" value="RPS2"/>
    <property type="match status" value="1"/>
</dbReference>
<dbReference type="Gene3D" id="3.40.50.10490">
    <property type="entry name" value="Glucose-6-phosphate isomerase like protein, domain 1"/>
    <property type="match status" value="1"/>
</dbReference>
<dbReference type="Gene3D" id="1.10.287.610">
    <property type="entry name" value="Helix hairpin bin"/>
    <property type="match status" value="1"/>
</dbReference>
<dbReference type="HAMAP" id="MF_00291_B">
    <property type="entry name" value="Ribosomal_uS2_B"/>
    <property type="match status" value="1"/>
</dbReference>
<dbReference type="InterPro" id="IPR001865">
    <property type="entry name" value="Ribosomal_uS2"/>
</dbReference>
<dbReference type="InterPro" id="IPR005706">
    <property type="entry name" value="Ribosomal_uS2_bac/mit/plastid"/>
</dbReference>
<dbReference type="InterPro" id="IPR018130">
    <property type="entry name" value="Ribosomal_uS2_CS"/>
</dbReference>
<dbReference type="InterPro" id="IPR023591">
    <property type="entry name" value="Ribosomal_uS2_flav_dom_sf"/>
</dbReference>
<dbReference type="NCBIfam" id="TIGR01011">
    <property type="entry name" value="rpsB_bact"/>
    <property type="match status" value="1"/>
</dbReference>
<dbReference type="PANTHER" id="PTHR12534">
    <property type="entry name" value="30S RIBOSOMAL PROTEIN S2 PROKARYOTIC AND ORGANELLAR"/>
    <property type="match status" value="1"/>
</dbReference>
<dbReference type="PANTHER" id="PTHR12534:SF0">
    <property type="entry name" value="SMALL RIBOSOMAL SUBUNIT PROTEIN US2M"/>
    <property type="match status" value="1"/>
</dbReference>
<dbReference type="Pfam" id="PF00318">
    <property type="entry name" value="Ribosomal_S2"/>
    <property type="match status" value="1"/>
</dbReference>
<dbReference type="PRINTS" id="PR00395">
    <property type="entry name" value="RIBOSOMALS2"/>
</dbReference>
<dbReference type="SUPFAM" id="SSF52313">
    <property type="entry name" value="Ribosomal protein S2"/>
    <property type="match status" value="1"/>
</dbReference>
<dbReference type="PROSITE" id="PS00962">
    <property type="entry name" value="RIBOSOMAL_S2_1"/>
    <property type="match status" value="1"/>
</dbReference>
<dbReference type="PROSITE" id="PS00963">
    <property type="entry name" value="RIBOSOMAL_S2_2"/>
    <property type="match status" value="1"/>
</dbReference>
<organism>
    <name type="scientific">Ruegeria pomeroyi (strain ATCC 700808 / DSM 15171 / DSS-3)</name>
    <name type="common">Silicibacter pomeroyi</name>
    <dbReference type="NCBI Taxonomy" id="246200"/>
    <lineage>
        <taxon>Bacteria</taxon>
        <taxon>Pseudomonadati</taxon>
        <taxon>Pseudomonadota</taxon>
        <taxon>Alphaproteobacteria</taxon>
        <taxon>Rhodobacterales</taxon>
        <taxon>Roseobacteraceae</taxon>
        <taxon>Ruegeria</taxon>
    </lineage>
</organism>
<protein>
    <recommendedName>
        <fullName evidence="1">Small ribosomal subunit protein uS2</fullName>
    </recommendedName>
    <alternativeName>
        <fullName evidence="2">30S ribosomal protein S2</fullName>
    </alternativeName>
</protein>
<gene>
    <name evidence="1" type="primary">rpsB</name>
    <name type="ordered locus">SPO1976</name>
</gene>
<sequence length="257" mass="27644">MALPEFSMRQLLEAGVHFGHQTQRWNPRMSPFIYGARNGIHILDLTQTVPMLDQALKAVRDTVAKGGRVLFVGTKRQASGPIAEAAEKSAQYYMNHRWLGGTLTNWKTVSQSIQRLRMIDEKMEGGAEGLTKKERLGMERDQAKLQASLGGIREMGGVPDLLFVIDVKKEALAIAEANKLGIPVVAVVDTNCSPDGVDYIIPGNDDAARAISLYCDLAARAALDGMTAQLGAAGVDLGELEEAPAEEALAEEAAAEA</sequence>
<comment type="similarity">
    <text evidence="1">Belongs to the universal ribosomal protein uS2 family.</text>
</comment>
<proteinExistence type="inferred from homology"/>
<reference key="1">
    <citation type="journal article" date="2004" name="Nature">
        <title>Genome sequence of Silicibacter pomeroyi reveals adaptations to the marine environment.</title>
        <authorList>
            <person name="Moran M.A."/>
            <person name="Buchan A."/>
            <person name="Gonzalez J.M."/>
            <person name="Heidelberg J.F."/>
            <person name="Whitman W.B."/>
            <person name="Kiene R.P."/>
            <person name="Henriksen J.R."/>
            <person name="King G.M."/>
            <person name="Belas R."/>
            <person name="Fuqua C."/>
            <person name="Brinkac L.M."/>
            <person name="Lewis M."/>
            <person name="Johri S."/>
            <person name="Weaver B."/>
            <person name="Pai G."/>
            <person name="Eisen J.A."/>
            <person name="Rahe E."/>
            <person name="Sheldon W.M."/>
            <person name="Ye W."/>
            <person name="Miller T.R."/>
            <person name="Carlton J."/>
            <person name="Rasko D.A."/>
            <person name="Paulsen I.T."/>
            <person name="Ren Q."/>
            <person name="Daugherty S.C."/>
            <person name="DeBoy R.T."/>
            <person name="Dodson R.J."/>
            <person name="Durkin A.S."/>
            <person name="Madupu R."/>
            <person name="Nelson W.C."/>
            <person name="Sullivan S.A."/>
            <person name="Rosovitz M.J."/>
            <person name="Haft D.H."/>
            <person name="Selengut J."/>
            <person name="Ward N."/>
        </authorList>
    </citation>
    <scope>NUCLEOTIDE SEQUENCE [LARGE SCALE GENOMIC DNA]</scope>
    <source>
        <strain>ATCC 700808 / DSM 15171 / DSS-3</strain>
    </source>
</reference>
<reference key="2">
    <citation type="journal article" date="2014" name="Stand. Genomic Sci.">
        <title>An updated genome annotation for the model marine bacterium Ruegeria pomeroyi DSS-3.</title>
        <authorList>
            <person name="Rivers A.R."/>
            <person name="Smith C.B."/>
            <person name="Moran M.A."/>
        </authorList>
    </citation>
    <scope>GENOME REANNOTATION</scope>
    <source>
        <strain>ATCC 700808 / DSM 15171 / DSS-3</strain>
    </source>
</reference>
<keyword id="KW-1185">Reference proteome</keyword>
<keyword id="KW-0687">Ribonucleoprotein</keyword>
<keyword id="KW-0689">Ribosomal protein</keyword>
<name>RS2_RUEPO</name>
<feature type="chain" id="PRO_0000134235" description="Small ribosomal subunit protein uS2">
    <location>
        <begin position="1"/>
        <end position="257"/>
    </location>
</feature>